<protein>
    <recommendedName>
        <fullName>Acylphosphatase</fullName>
        <ecNumber>3.6.1.7</ecNumber>
    </recommendedName>
    <alternativeName>
        <fullName>Acylphosphate phosphohydrolase</fullName>
    </alternativeName>
</protein>
<accession>Q83AB0</accession>
<dbReference type="EC" id="3.6.1.7"/>
<dbReference type="EMBL" id="AE016828">
    <property type="protein sequence ID" value="AAO91484.2"/>
    <property type="molecule type" value="Genomic_DNA"/>
</dbReference>
<dbReference type="RefSeq" id="NP_820970.2">
    <property type="nucleotide sequence ID" value="NC_002971.3"/>
</dbReference>
<dbReference type="RefSeq" id="WP_010958585.1">
    <property type="nucleotide sequence ID" value="NC_002971.4"/>
</dbReference>
<dbReference type="PDB" id="3TRG">
    <property type="method" value="X-ray"/>
    <property type="resolution" value="1.60 A"/>
    <property type="chains" value="A=1-95"/>
</dbReference>
<dbReference type="PDBsum" id="3TRG"/>
<dbReference type="SMR" id="Q83AB0"/>
<dbReference type="STRING" id="227377.CBU_1995"/>
<dbReference type="DNASU" id="1209908"/>
<dbReference type="EnsemblBacteria" id="AAO91484">
    <property type="protein sequence ID" value="AAO91484"/>
    <property type="gene ID" value="CBU_1995"/>
</dbReference>
<dbReference type="GeneID" id="1209908"/>
<dbReference type="KEGG" id="cbu:CBU_1995"/>
<dbReference type="PATRIC" id="fig|227377.7.peg.1982"/>
<dbReference type="eggNOG" id="COG1254">
    <property type="taxonomic scope" value="Bacteria"/>
</dbReference>
<dbReference type="HOGENOM" id="CLU_141932_1_0_6"/>
<dbReference type="OrthoDB" id="5295388at2"/>
<dbReference type="EvolutionaryTrace" id="Q83AB0"/>
<dbReference type="Proteomes" id="UP000002671">
    <property type="component" value="Chromosome"/>
</dbReference>
<dbReference type="GO" id="GO:0003998">
    <property type="term" value="F:acylphosphatase activity"/>
    <property type="evidence" value="ECO:0000318"/>
    <property type="project" value="GO_Central"/>
</dbReference>
<dbReference type="FunFam" id="3.30.70.100:FF:000054">
    <property type="entry name" value="Acylphosphatase"/>
    <property type="match status" value="1"/>
</dbReference>
<dbReference type="Gene3D" id="3.30.70.100">
    <property type="match status" value="1"/>
</dbReference>
<dbReference type="InterPro" id="IPR020456">
    <property type="entry name" value="Acylphosphatase"/>
</dbReference>
<dbReference type="InterPro" id="IPR001792">
    <property type="entry name" value="Acylphosphatase-like_dom"/>
</dbReference>
<dbReference type="InterPro" id="IPR036046">
    <property type="entry name" value="Acylphosphatase-like_dom_sf"/>
</dbReference>
<dbReference type="InterPro" id="IPR017968">
    <property type="entry name" value="Acylphosphatase_CS"/>
</dbReference>
<dbReference type="NCBIfam" id="NF011022">
    <property type="entry name" value="PRK14451.1"/>
    <property type="match status" value="1"/>
</dbReference>
<dbReference type="PANTHER" id="PTHR10029">
    <property type="entry name" value="ACYLPHOSPHATASE"/>
    <property type="match status" value="1"/>
</dbReference>
<dbReference type="PANTHER" id="PTHR10029:SF3">
    <property type="entry name" value="ACYLPHOSPHATASE-RELATED"/>
    <property type="match status" value="1"/>
</dbReference>
<dbReference type="Pfam" id="PF00708">
    <property type="entry name" value="Acylphosphatase"/>
    <property type="match status" value="1"/>
</dbReference>
<dbReference type="PRINTS" id="PR00112">
    <property type="entry name" value="ACYLPHPHTASE"/>
</dbReference>
<dbReference type="SUPFAM" id="SSF54975">
    <property type="entry name" value="Acylphosphatase/BLUF domain-like"/>
    <property type="match status" value="1"/>
</dbReference>
<dbReference type="PROSITE" id="PS00150">
    <property type="entry name" value="ACYLPHOSPHATASE_1"/>
    <property type="match status" value="1"/>
</dbReference>
<dbReference type="PROSITE" id="PS00151">
    <property type="entry name" value="ACYLPHOSPHATASE_2"/>
    <property type="match status" value="1"/>
</dbReference>
<dbReference type="PROSITE" id="PS51160">
    <property type="entry name" value="ACYLPHOSPHATASE_3"/>
    <property type="match status" value="1"/>
</dbReference>
<reference key="1">
    <citation type="journal article" date="2003" name="Proc. Natl. Acad. Sci. U.S.A.">
        <title>Complete genome sequence of the Q-fever pathogen, Coxiella burnetii.</title>
        <authorList>
            <person name="Seshadri R."/>
            <person name="Paulsen I.T."/>
            <person name="Eisen J.A."/>
            <person name="Read T.D."/>
            <person name="Nelson K.E."/>
            <person name="Nelson W.C."/>
            <person name="Ward N.L."/>
            <person name="Tettelin H."/>
            <person name="Davidsen T.M."/>
            <person name="Beanan M.J."/>
            <person name="DeBoy R.T."/>
            <person name="Daugherty S.C."/>
            <person name="Brinkac L.M."/>
            <person name="Madupu R."/>
            <person name="Dodson R.J."/>
            <person name="Khouri H.M."/>
            <person name="Lee K.H."/>
            <person name="Carty H.A."/>
            <person name="Scanlan D."/>
            <person name="Heinzen R.A."/>
            <person name="Thompson H.A."/>
            <person name="Samuel J.E."/>
            <person name="Fraser C.M."/>
            <person name="Heidelberg J.F."/>
        </authorList>
    </citation>
    <scope>NUCLEOTIDE SEQUENCE [LARGE SCALE GENOMIC DNA]</scope>
    <source>
        <strain>RSA 493 / Nine Mile phase I</strain>
    </source>
</reference>
<comment type="catalytic activity">
    <reaction>
        <text>an acyl phosphate + H2O = a carboxylate + phosphate + H(+)</text>
        <dbReference type="Rhea" id="RHEA:14965"/>
        <dbReference type="ChEBI" id="CHEBI:15377"/>
        <dbReference type="ChEBI" id="CHEBI:15378"/>
        <dbReference type="ChEBI" id="CHEBI:29067"/>
        <dbReference type="ChEBI" id="CHEBI:43474"/>
        <dbReference type="ChEBI" id="CHEBI:59918"/>
        <dbReference type="EC" id="3.6.1.7"/>
    </reaction>
</comment>
<comment type="similarity">
    <text evidence="2">Belongs to the acylphosphatase family.</text>
</comment>
<sequence>MTQKEKNETCIHVTVSGKVQGVFFRESVRKKAEELQLTGWVKNLSHGDVELVACGERDSIMILTEWLWEGPPQAAVSNVNWEEIVVEDYSDFRVR</sequence>
<feature type="chain" id="PRO_0000326693" description="Acylphosphatase">
    <location>
        <begin position="1"/>
        <end position="95"/>
    </location>
</feature>
<feature type="domain" description="Acylphosphatase-like" evidence="1">
    <location>
        <begin position="10"/>
        <end position="95"/>
    </location>
</feature>
<feature type="active site" evidence="1">
    <location>
        <position position="25"/>
    </location>
</feature>
<feature type="active site" evidence="1">
    <location>
        <position position="43"/>
    </location>
</feature>
<feature type="helix" evidence="3">
    <location>
        <begin position="3"/>
        <end position="7"/>
    </location>
</feature>
<feature type="strand" evidence="3">
    <location>
        <begin position="8"/>
        <end position="18"/>
    </location>
</feature>
<feature type="strand" evidence="3">
    <location>
        <begin position="20"/>
        <end position="22"/>
    </location>
</feature>
<feature type="helix" evidence="3">
    <location>
        <begin position="24"/>
        <end position="34"/>
    </location>
</feature>
<feature type="strand" evidence="3">
    <location>
        <begin position="38"/>
        <end position="43"/>
    </location>
</feature>
<feature type="strand" evidence="3">
    <location>
        <begin position="49"/>
        <end position="56"/>
    </location>
</feature>
<feature type="helix" evidence="3">
    <location>
        <begin position="57"/>
        <end position="66"/>
    </location>
</feature>
<feature type="turn" evidence="3">
    <location>
        <begin position="67"/>
        <end position="69"/>
    </location>
</feature>
<feature type="strand" evidence="3">
    <location>
        <begin position="75"/>
        <end position="85"/>
    </location>
</feature>
<feature type="strand" evidence="3">
    <location>
        <begin position="90"/>
        <end position="94"/>
    </location>
</feature>
<evidence type="ECO:0000255" key="1">
    <source>
        <dbReference type="PROSITE-ProRule" id="PRU00520"/>
    </source>
</evidence>
<evidence type="ECO:0000305" key="2"/>
<evidence type="ECO:0007829" key="3">
    <source>
        <dbReference type="PDB" id="3TRG"/>
    </source>
</evidence>
<keyword id="KW-0002">3D-structure</keyword>
<keyword id="KW-0378">Hydrolase</keyword>
<keyword id="KW-1185">Reference proteome</keyword>
<name>ACYP_COXBU</name>
<proteinExistence type="evidence at protein level"/>
<organism>
    <name type="scientific">Coxiella burnetii (strain RSA 493 / Nine Mile phase I)</name>
    <dbReference type="NCBI Taxonomy" id="227377"/>
    <lineage>
        <taxon>Bacteria</taxon>
        <taxon>Pseudomonadati</taxon>
        <taxon>Pseudomonadota</taxon>
        <taxon>Gammaproteobacteria</taxon>
        <taxon>Legionellales</taxon>
        <taxon>Coxiellaceae</taxon>
        <taxon>Coxiella</taxon>
    </lineage>
</organism>
<gene>
    <name type="primary">acyP</name>
    <name type="ordered locus">CBU_1995</name>
</gene>